<accession>Q6GJM8</accession>
<dbReference type="EMBL" id="BX571856">
    <property type="protein sequence ID" value="CAG39465.1"/>
    <property type="status" value="ALT_INIT"/>
    <property type="molecule type" value="Genomic_DNA"/>
</dbReference>
<dbReference type="RefSeq" id="WP_000455735.1">
    <property type="nucleotide sequence ID" value="NC_002952.2"/>
</dbReference>
<dbReference type="SMR" id="Q6GJM8"/>
<dbReference type="KEGG" id="sar:SAR0445"/>
<dbReference type="HOGENOM" id="CLU_071589_0_1_9"/>
<dbReference type="Proteomes" id="UP000000596">
    <property type="component" value="Chromosome"/>
</dbReference>
<dbReference type="GO" id="GO:0005886">
    <property type="term" value="C:plasma membrane"/>
    <property type="evidence" value="ECO:0007669"/>
    <property type="project" value="UniProtKB-SubCell"/>
</dbReference>
<dbReference type="Gene3D" id="2.50.20.40">
    <property type="match status" value="1"/>
</dbReference>
<dbReference type="InterPro" id="IPR007595">
    <property type="entry name" value="Csa"/>
</dbReference>
<dbReference type="InterPro" id="IPR038641">
    <property type="entry name" value="Csa_sf"/>
</dbReference>
<dbReference type="NCBIfam" id="TIGR01742">
    <property type="entry name" value="SA_tandem_lipo"/>
    <property type="match status" value="1"/>
</dbReference>
<dbReference type="Pfam" id="PF04507">
    <property type="entry name" value="DUF576"/>
    <property type="match status" value="1"/>
</dbReference>
<dbReference type="PROSITE" id="PS51257">
    <property type="entry name" value="PROKAR_LIPOPROTEIN"/>
    <property type="match status" value="1"/>
</dbReference>
<reference key="1">
    <citation type="journal article" date="2004" name="Proc. Natl. Acad. Sci. U.S.A.">
        <title>Complete genomes of two clinical Staphylococcus aureus strains: evidence for the rapid evolution of virulence and drug resistance.</title>
        <authorList>
            <person name="Holden M.T.G."/>
            <person name="Feil E.J."/>
            <person name="Lindsay J.A."/>
            <person name="Peacock S.J."/>
            <person name="Day N.P.J."/>
            <person name="Enright M.C."/>
            <person name="Foster T.J."/>
            <person name="Moore C.E."/>
            <person name="Hurst L."/>
            <person name="Atkin R."/>
            <person name="Barron A."/>
            <person name="Bason N."/>
            <person name="Bentley S.D."/>
            <person name="Chillingworth C."/>
            <person name="Chillingworth T."/>
            <person name="Churcher C."/>
            <person name="Clark L."/>
            <person name="Corton C."/>
            <person name="Cronin A."/>
            <person name="Doggett J."/>
            <person name="Dowd L."/>
            <person name="Feltwell T."/>
            <person name="Hance Z."/>
            <person name="Harris B."/>
            <person name="Hauser H."/>
            <person name="Holroyd S."/>
            <person name="Jagels K."/>
            <person name="James K.D."/>
            <person name="Lennard N."/>
            <person name="Line A."/>
            <person name="Mayes R."/>
            <person name="Moule S."/>
            <person name="Mungall K."/>
            <person name="Ormond D."/>
            <person name="Quail M.A."/>
            <person name="Rabbinowitsch E."/>
            <person name="Rutherford K.M."/>
            <person name="Sanders M."/>
            <person name="Sharp S."/>
            <person name="Simmonds M."/>
            <person name="Stevens K."/>
            <person name="Whitehead S."/>
            <person name="Barrell B.G."/>
            <person name="Spratt B.G."/>
            <person name="Parkhill J."/>
        </authorList>
    </citation>
    <scope>NUCLEOTIDE SEQUENCE [LARGE SCALE GENOMIC DNA]</scope>
    <source>
        <strain>MRSA252</strain>
    </source>
</reference>
<protein>
    <recommendedName>
        <fullName>Uncharacterized lipoprotein SAR0445</fullName>
    </recommendedName>
</protein>
<name>Y445_STAAR</name>
<evidence type="ECO:0000255" key="1">
    <source>
        <dbReference type="PROSITE-ProRule" id="PRU00303"/>
    </source>
</evidence>
<evidence type="ECO:0000305" key="2"/>
<proteinExistence type="inferred from homology"/>
<gene>
    <name type="ordered locus">SAR0445</name>
</gene>
<comment type="subcellular location">
    <subcellularLocation>
        <location evidence="1">Cell membrane</location>
        <topology evidence="1">Lipid-anchor</topology>
    </subcellularLocation>
</comment>
<comment type="similarity">
    <text evidence="2">Belongs to the staphylococcal tandem lipoprotein family.</text>
</comment>
<comment type="sequence caution" evidence="2">
    <conflict type="erroneous initiation">
        <sequence resource="EMBL-CDS" id="CAG39465"/>
    </conflict>
</comment>
<organism>
    <name type="scientific">Staphylococcus aureus (strain MRSA252)</name>
    <dbReference type="NCBI Taxonomy" id="282458"/>
    <lineage>
        <taxon>Bacteria</taxon>
        <taxon>Bacillati</taxon>
        <taxon>Bacillota</taxon>
        <taxon>Bacilli</taxon>
        <taxon>Bacillales</taxon>
        <taxon>Staphylococcaceae</taxon>
        <taxon>Staphylococcus</taxon>
    </lineage>
</organism>
<keyword id="KW-1003">Cell membrane</keyword>
<keyword id="KW-0449">Lipoprotein</keyword>
<keyword id="KW-0472">Membrane</keyword>
<keyword id="KW-0564">Palmitate</keyword>
<keyword id="KW-0732">Signal</keyword>
<sequence length="272" mass="31660">MEYIKKIALYMSVLLLIIFIGGCGNMKDEQKKEEQTNKTDSKEEQIKKSFAKTLDMYPIKNLEDLYDKEGYRDGEFEKGDKGMWVLYSSIVSEFKGESLKSRGMILKLDRNKRTAKGSYIIRELKEDKNHDVQKNEKKYPVKLVNNKIIPTEDVKNEDLKREIENFKLFSQYGEFKSLNTDRITNISYNPNAPNYSAEYKINDDDNNIKQLKNRFNIKSNKNPKLLFKGAGNIKGSSVGYKEIQIIFNRNKEESVSCIDSIEFKPSEGDYNE</sequence>
<feature type="signal peptide" evidence="1">
    <location>
        <begin position="1"/>
        <end position="22"/>
    </location>
</feature>
<feature type="chain" id="PRO_0000282158" description="Uncharacterized lipoprotein SAR0445">
    <location>
        <begin position="23"/>
        <end position="272"/>
    </location>
</feature>
<feature type="lipid moiety-binding region" description="N-palmitoyl cysteine" evidence="1">
    <location>
        <position position="23"/>
    </location>
</feature>
<feature type="lipid moiety-binding region" description="S-diacylglycerol cysteine" evidence="1">
    <location>
        <position position="23"/>
    </location>
</feature>